<proteinExistence type="evidence at protein level"/>
<name>ETFA_SYNWW</name>
<accession>Q0AZ33</accession>
<gene>
    <name evidence="4" type="primary">etfA</name>
    <name evidence="8" type="ordered locus">Swol_0697</name>
</gene>
<evidence type="ECO:0000250" key="1">
    <source>
        <dbReference type="UniProtKB" id="P13804"/>
    </source>
</evidence>
<evidence type="ECO:0000269" key="2">
    <source>
    </source>
</evidence>
<evidence type="ECO:0000269" key="3">
    <source>
    </source>
</evidence>
<evidence type="ECO:0000303" key="4">
    <source>
    </source>
</evidence>
<evidence type="ECO:0000305" key="5"/>
<evidence type="ECO:0000305" key="6">
    <source>
    </source>
</evidence>
<evidence type="ECO:0000305" key="7">
    <source>
    </source>
</evidence>
<evidence type="ECO:0000312" key="8">
    <source>
        <dbReference type="EMBL" id="ABI68021.1"/>
    </source>
</evidence>
<comment type="function">
    <text evidence="6 7">Part of an electron transfer flavoprotein involved in syntrophic growth of S.wolfei with butyrate. Probably receives electrons from butyryl-CoA dehydrogenases, and transfers them to the membrane-bound quinone oxidoreductase Swol_0698.</text>
</comment>
<comment type="cofactor">
    <cofactor evidence="1">
        <name>FAD</name>
        <dbReference type="ChEBI" id="CHEBI:57692"/>
    </cofactor>
    <text evidence="1">Binds 1 FAD per subunit.</text>
</comment>
<comment type="pathway">
    <text evidence="6 7">Lipid metabolism; butanoate metabolism.</text>
</comment>
<comment type="subunit">
    <text evidence="1">Heterodimer of an alpha and a beta subunit.</text>
</comment>
<comment type="subcellular location">
    <subcellularLocation>
        <location evidence="3">Cytoplasm</location>
    </subcellularLocation>
</comment>
<comment type="induction">
    <text evidence="2 3">Highly expressed during syntrophic growth with butyrate (at protein level) (PubMed:19648244, PubMed:23468890). Seems to be constitutively expressed (PubMed:23468890).</text>
</comment>
<comment type="similarity">
    <text evidence="5">Belongs to the ETF alpha-subunit/FixB family.</text>
</comment>
<sequence length="317" mass="33043">MAGTWIFVEQRDGNIRKVTFEMLSEAKKFGDEVAAVVFGKGVEALAPEFAKYGADKVYVVEDDVFANYNTGAYVAQMVAMINEFKPNAVLFAHTFNGRDFASRLAQKLQLGLATDAIKVEVSAGKGVFTRAIYAGKALAKVEVAGEPVLGTIRPGVCEVGNTAGAGAVVKPAVAATAADVYQTVKSFVPTVSARPELTEADVVVSGGRGCKGPDGIKLVEQLADLLGAAVGGSRASIDSGWLGHELQVGQTGKVVNPNLYVAAGISGAIQHLAGMSSSKFIAAINTDTEAPIFNVSDFGVVADLFKVIPTLVSELKK</sequence>
<protein>
    <recommendedName>
        <fullName evidence="4">Electron transfer flavoprotein subunit alpha</fullName>
    </recommendedName>
</protein>
<organism>
    <name type="scientific">Syntrophomonas wolfei subsp. wolfei (strain DSM 2245B / Goettingen)</name>
    <dbReference type="NCBI Taxonomy" id="335541"/>
    <lineage>
        <taxon>Bacteria</taxon>
        <taxon>Bacillati</taxon>
        <taxon>Bacillota</taxon>
        <taxon>Clostridia</taxon>
        <taxon>Eubacteriales</taxon>
        <taxon>Syntrophomonadaceae</taxon>
        <taxon>Syntrophomonas</taxon>
    </lineage>
</organism>
<keyword id="KW-0963">Cytoplasm</keyword>
<keyword id="KW-0249">Electron transport</keyword>
<keyword id="KW-0274">FAD</keyword>
<keyword id="KW-0276">Fatty acid metabolism</keyword>
<keyword id="KW-0285">Flavoprotein</keyword>
<keyword id="KW-0443">Lipid metabolism</keyword>
<keyword id="KW-1185">Reference proteome</keyword>
<keyword id="KW-0813">Transport</keyword>
<feature type="chain" id="PRO_0000442217" description="Electron transfer flavoprotein subunit alpha">
    <location>
        <begin position="1"/>
        <end position="317"/>
    </location>
</feature>
<dbReference type="EMBL" id="CP000448">
    <property type="protein sequence ID" value="ABI68021.1"/>
    <property type="molecule type" value="Genomic_DNA"/>
</dbReference>
<dbReference type="RefSeq" id="WP_011640126.1">
    <property type="nucleotide sequence ID" value="NC_008346.1"/>
</dbReference>
<dbReference type="SMR" id="Q0AZ33"/>
<dbReference type="STRING" id="335541.Swol_0697"/>
<dbReference type="KEGG" id="swo:Swol_0697"/>
<dbReference type="eggNOG" id="COG2025">
    <property type="taxonomic scope" value="Bacteria"/>
</dbReference>
<dbReference type="HOGENOM" id="CLU_034178_0_1_9"/>
<dbReference type="OrthoDB" id="9770286at2"/>
<dbReference type="UniPathway" id="UPA00863"/>
<dbReference type="Proteomes" id="UP000001968">
    <property type="component" value="Chromosome"/>
</dbReference>
<dbReference type="GO" id="GO:0005737">
    <property type="term" value="C:cytoplasm"/>
    <property type="evidence" value="ECO:0007669"/>
    <property type="project" value="UniProtKB-SubCell"/>
</dbReference>
<dbReference type="GO" id="GO:0009055">
    <property type="term" value="F:electron transfer activity"/>
    <property type="evidence" value="ECO:0007669"/>
    <property type="project" value="InterPro"/>
</dbReference>
<dbReference type="GO" id="GO:0050660">
    <property type="term" value="F:flavin adenine dinucleotide binding"/>
    <property type="evidence" value="ECO:0007669"/>
    <property type="project" value="InterPro"/>
</dbReference>
<dbReference type="GO" id="GO:0019605">
    <property type="term" value="P:butyrate metabolic process"/>
    <property type="evidence" value="ECO:0007669"/>
    <property type="project" value="UniProtKB-UniPathway"/>
</dbReference>
<dbReference type="GO" id="GO:0033539">
    <property type="term" value="P:fatty acid beta-oxidation using acyl-CoA dehydrogenase"/>
    <property type="evidence" value="ECO:0007669"/>
    <property type="project" value="TreeGrafter"/>
</dbReference>
<dbReference type="CDD" id="cd01715">
    <property type="entry name" value="ETF_alpha"/>
    <property type="match status" value="1"/>
</dbReference>
<dbReference type="FunFam" id="3.40.50.1220:FF:000001">
    <property type="entry name" value="Electron transfer flavoprotein, alpha subunit"/>
    <property type="match status" value="1"/>
</dbReference>
<dbReference type="Gene3D" id="3.40.50.620">
    <property type="entry name" value="HUPs"/>
    <property type="match status" value="1"/>
</dbReference>
<dbReference type="Gene3D" id="3.40.50.1220">
    <property type="entry name" value="TPP-binding domain"/>
    <property type="match status" value="1"/>
</dbReference>
<dbReference type="InterPro" id="IPR029035">
    <property type="entry name" value="DHS-like_NAD/FAD-binding_dom"/>
</dbReference>
<dbReference type="InterPro" id="IPR014730">
    <property type="entry name" value="ETF_a/b_N"/>
</dbReference>
<dbReference type="InterPro" id="IPR001308">
    <property type="entry name" value="ETF_a/FixB"/>
</dbReference>
<dbReference type="InterPro" id="IPR033947">
    <property type="entry name" value="ETF_alpha_N"/>
</dbReference>
<dbReference type="InterPro" id="IPR014731">
    <property type="entry name" value="ETF_asu_C"/>
</dbReference>
<dbReference type="InterPro" id="IPR018206">
    <property type="entry name" value="ETF_asu_C_CS"/>
</dbReference>
<dbReference type="InterPro" id="IPR014729">
    <property type="entry name" value="Rossmann-like_a/b/a_fold"/>
</dbReference>
<dbReference type="PANTHER" id="PTHR43153">
    <property type="entry name" value="ELECTRON TRANSFER FLAVOPROTEIN ALPHA"/>
    <property type="match status" value="1"/>
</dbReference>
<dbReference type="PANTHER" id="PTHR43153:SF1">
    <property type="entry name" value="ELECTRON TRANSFER FLAVOPROTEIN SUBUNIT ALPHA, MITOCHONDRIAL"/>
    <property type="match status" value="1"/>
</dbReference>
<dbReference type="Pfam" id="PF01012">
    <property type="entry name" value="ETF"/>
    <property type="match status" value="1"/>
</dbReference>
<dbReference type="Pfam" id="PF00766">
    <property type="entry name" value="ETF_alpha"/>
    <property type="match status" value="1"/>
</dbReference>
<dbReference type="PIRSF" id="PIRSF000089">
    <property type="entry name" value="Electra_flavoP_a"/>
    <property type="match status" value="1"/>
</dbReference>
<dbReference type="SMART" id="SM00893">
    <property type="entry name" value="ETF"/>
    <property type="match status" value="1"/>
</dbReference>
<dbReference type="SUPFAM" id="SSF52402">
    <property type="entry name" value="Adenine nucleotide alpha hydrolases-like"/>
    <property type="match status" value="1"/>
</dbReference>
<dbReference type="SUPFAM" id="SSF52467">
    <property type="entry name" value="DHS-like NAD/FAD-binding domain"/>
    <property type="match status" value="1"/>
</dbReference>
<dbReference type="PROSITE" id="PS00696">
    <property type="entry name" value="ETF_ALPHA"/>
    <property type="match status" value="1"/>
</dbReference>
<reference key="1">
    <citation type="journal article" date="2010" name="Environ. Microbiol.">
        <title>The genome of Syntrophomonas wolfei: new insights into syntrophic metabolism and biohydrogen production.</title>
        <authorList>
            <person name="Sieber J.R."/>
            <person name="Sims D.R."/>
            <person name="Han C."/>
            <person name="Kim E."/>
            <person name="Lykidis A."/>
            <person name="Lapidus A.L."/>
            <person name="McDonnald E."/>
            <person name="Rohlin L."/>
            <person name="Culley D.E."/>
            <person name="Gunsalus R."/>
            <person name="McInerney M.J."/>
        </authorList>
    </citation>
    <scope>NUCLEOTIDE SEQUENCE [LARGE SCALE GENOMIC DNA]</scope>
    <source>
        <strain>DSM 2245B / Goettingen</strain>
    </source>
</reference>
<reference key="2">
    <citation type="journal article" date="2009" name="J. Bacteriol.">
        <title>Involvement of NADH:acceptor oxidoreductase and butyryl coenzyme A dehydrogenase in reversed electron transport during syntrophic butyrate oxidation by Syntrophomonas wolfei.</title>
        <authorList>
            <person name="Mueller N."/>
            <person name="Schleheck D."/>
            <person name="Schink B."/>
        </authorList>
    </citation>
    <scope>IDENTIFICATION BY MASS SPECTROMETRY</scope>
    <scope>FUNCTION</scope>
    <scope>INDUCTION</scope>
    <scope>PATHWAY</scope>
</reference>
<reference key="3">
    <citation type="journal article" date="2013" name="PLoS ONE">
        <title>A proteomic view at the biochemistry of syntrophic butyrate oxidation in Syntrophomonas wolfei.</title>
        <authorList>
            <person name="Schmidt A."/>
            <person name="Mueller N."/>
            <person name="Schink B."/>
            <person name="Schleheck D."/>
        </authorList>
    </citation>
    <scope>IDENTIFICATION BY MASS SPECTROMETRY</scope>
    <scope>INDUCTION</scope>
    <scope>SUBCELLULAR LOCATION</scope>
    <scope>FUNCTION</scope>
    <scope>PATHWAY</scope>
</reference>